<keyword id="KW-0501">Molybdenum cofactor biosynthesis</keyword>
<keyword id="KW-0808">Transferase</keyword>
<evidence type="ECO:0000250" key="1"/>
<evidence type="ECO:0000305" key="2"/>
<gene>
    <name type="primary">moaE</name>
    <name type="ordered locus">SAR2355</name>
</gene>
<feature type="chain" id="PRO_0000163100" description="Molybdopterin synthase catalytic subunit">
    <location>
        <begin position="1"/>
        <end position="148"/>
    </location>
</feature>
<feature type="binding site" evidence="1">
    <location>
        <begin position="34"/>
        <end position="36"/>
    </location>
    <ligand>
        <name>substrate</name>
    </ligand>
</feature>
<feature type="binding site" evidence="1">
    <location>
        <position position="44"/>
    </location>
    <ligand>
        <name>substrate</name>
    </ligand>
</feature>
<feature type="binding site" evidence="1">
    <location>
        <begin position="100"/>
        <end position="101"/>
    </location>
    <ligand>
        <name>substrate</name>
    </ligand>
</feature>
<feature type="binding site" evidence="1">
    <location>
        <position position="116"/>
    </location>
    <ligand>
        <name>substrate</name>
    </ligand>
</feature>
<feature type="binding site" evidence="1">
    <location>
        <begin position="123"/>
        <end position="125"/>
    </location>
    <ligand>
        <name>substrate</name>
    </ligand>
</feature>
<sequence>MKQFEIVTEPIQTEQYREFTINEYQGAVVVFTGHVREWTKGVKTEYLEYEAYIPMAEKKLAQIGDEINEKWPGTITSIVHRIGPLQISDIAVLIAVSSPHRKDAYRANEYAIERIKEIVPIWKKEIWEDGSKWQGHQKGNYEEAKREE</sequence>
<reference key="1">
    <citation type="journal article" date="2004" name="Proc. Natl. Acad. Sci. U.S.A.">
        <title>Complete genomes of two clinical Staphylococcus aureus strains: evidence for the rapid evolution of virulence and drug resistance.</title>
        <authorList>
            <person name="Holden M.T.G."/>
            <person name="Feil E.J."/>
            <person name="Lindsay J.A."/>
            <person name="Peacock S.J."/>
            <person name="Day N.P.J."/>
            <person name="Enright M.C."/>
            <person name="Foster T.J."/>
            <person name="Moore C.E."/>
            <person name="Hurst L."/>
            <person name="Atkin R."/>
            <person name="Barron A."/>
            <person name="Bason N."/>
            <person name="Bentley S.D."/>
            <person name="Chillingworth C."/>
            <person name="Chillingworth T."/>
            <person name="Churcher C."/>
            <person name="Clark L."/>
            <person name="Corton C."/>
            <person name="Cronin A."/>
            <person name="Doggett J."/>
            <person name="Dowd L."/>
            <person name="Feltwell T."/>
            <person name="Hance Z."/>
            <person name="Harris B."/>
            <person name="Hauser H."/>
            <person name="Holroyd S."/>
            <person name="Jagels K."/>
            <person name="James K.D."/>
            <person name="Lennard N."/>
            <person name="Line A."/>
            <person name="Mayes R."/>
            <person name="Moule S."/>
            <person name="Mungall K."/>
            <person name="Ormond D."/>
            <person name="Quail M.A."/>
            <person name="Rabbinowitsch E."/>
            <person name="Rutherford K.M."/>
            <person name="Sanders M."/>
            <person name="Sharp S."/>
            <person name="Simmonds M."/>
            <person name="Stevens K."/>
            <person name="Whitehead S."/>
            <person name="Barrell B.G."/>
            <person name="Spratt B.G."/>
            <person name="Parkhill J."/>
        </authorList>
    </citation>
    <scope>NUCLEOTIDE SEQUENCE [LARGE SCALE GENOMIC DNA]</scope>
    <source>
        <strain>MRSA252</strain>
    </source>
</reference>
<dbReference type="EC" id="2.8.1.12"/>
<dbReference type="EMBL" id="BX571856">
    <property type="protein sequence ID" value="CAG41336.1"/>
    <property type="molecule type" value="Genomic_DNA"/>
</dbReference>
<dbReference type="RefSeq" id="WP_000808500.1">
    <property type="nucleotide sequence ID" value="NC_002952.2"/>
</dbReference>
<dbReference type="SMR" id="Q6GEG3"/>
<dbReference type="KEGG" id="sar:SAR2355"/>
<dbReference type="HOGENOM" id="CLU_089568_1_2_9"/>
<dbReference type="UniPathway" id="UPA00344"/>
<dbReference type="Proteomes" id="UP000000596">
    <property type="component" value="Chromosome"/>
</dbReference>
<dbReference type="GO" id="GO:0030366">
    <property type="term" value="F:molybdopterin synthase activity"/>
    <property type="evidence" value="ECO:0007669"/>
    <property type="project" value="UniProtKB-EC"/>
</dbReference>
<dbReference type="GO" id="GO:0006777">
    <property type="term" value="P:Mo-molybdopterin cofactor biosynthetic process"/>
    <property type="evidence" value="ECO:0007669"/>
    <property type="project" value="UniProtKB-KW"/>
</dbReference>
<dbReference type="CDD" id="cd00756">
    <property type="entry name" value="MoaE"/>
    <property type="match status" value="1"/>
</dbReference>
<dbReference type="FunFam" id="3.90.1170.40:FF:000003">
    <property type="entry name" value="Molybdopterin converting factor subunit 2"/>
    <property type="match status" value="1"/>
</dbReference>
<dbReference type="Gene3D" id="3.90.1170.40">
    <property type="entry name" value="Molybdopterin biosynthesis MoaE subunit"/>
    <property type="match status" value="1"/>
</dbReference>
<dbReference type="InterPro" id="IPR036563">
    <property type="entry name" value="MoaE_sf"/>
</dbReference>
<dbReference type="InterPro" id="IPR003448">
    <property type="entry name" value="Mopterin_biosynth_MoaE"/>
</dbReference>
<dbReference type="PANTHER" id="PTHR23404">
    <property type="entry name" value="MOLYBDOPTERIN SYNTHASE RELATED"/>
    <property type="match status" value="1"/>
</dbReference>
<dbReference type="Pfam" id="PF02391">
    <property type="entry name" value="MoaE"/>
    <property type="match status" value="1"/>
</dbReference>
<dbReference type="SUPFAM" id="SSF54690">
    <property type="entry name" value="Molybdopterin synthase subunit MoaE"/>
    <property type="match status" value="1"/>
</dbReference>
<name>MOAE_STAAR</name>
<organism>
    <name type="scientific">Staphylococcus aureus (strain MRSA252)</name>
    <dbReference type="NCBI Taxonomy" id="282458"/>
    <lineage>
        <taxon>Bacteria</taxon>
        <taxon>Bacillati</taxon>
        <taxon>Bacillota</taxon>
        <taxon>Bacilli</taxon>
        <taxon>Bacillales</taxon>
        <taxon>Staphylococcaceae</taxon>
        <taxon>Staphylococcus</taxon>
    </lineage>
</organism>
<accession>Q6GEG3</accession>
<proteinExistence type="inferred from homology"/>
<protein>
    <recommendedName>
        <fullName>Molybdopterin synthase catalytic subunit</fullName>
        <ecNumber>2.8.1.12</ecNumber>
    </recommendedName>
    <alternativeName>
        <fullName>MPT synthase subunit 2</fullName>
    </alternativeName>
    <alternativeName>
        <fullName>Molybdenum cofactor biosynthesis protein E</fullName>
    </alternativeName>
    <alternativeName>
        <fullName>Molybdopterin-converting factor large subunit</fullName>
    </alternativeName>
    <alternativeName>
        <fullName>Molybdopterin-converting factor subunit 2</fullName>
    </alternativeName>
</protein>
<comment type="function">
    <text evidence="1">Converts molybdopterin precursor Z into molybdopterin. This requires the incorporation of two sulfur atoms into precursor Z to generate a dithiolene group. The sulfur is provided by MoaD (By similarity).</text>
</comment>
<comment type="catalytic activity">
    <reaction>
        <text>2 [molybdopterin-synthase sulfur-carrier protein]-C-terminal-Gly-aminoethanethioate + cyclic pyranopterin phosphate + H2O = molybdopterin + 2 [molybdopterin-synthase sulfur-carrier protein]-C-terminal Gly-Gly + 2 H(+)</text>
        <dbReference type="Rhea" id="RHEA:26333"/>
        <dbReference type="Rhea" id="RHEA-COMP:12202"/>
        <dbReference type="Rhea" id="RHEA-COMP:19907"/>
        <dbReference type="ChEBI" id="CHEBI:15377"/>
        <dbReference type="ChEBI" id="CHEBI:15378"/>
        <dbReference type="ChEBI" id="CHEBI:58698"/>
        <dbReference type="ChEBI" id="CHEBI:59648"/>
        <dbReference type="ChEBI" id="CHEBI:90778"/>
        <dbReference type="ChEBI" id="CHEBI:232372"/>
        <dbReference type="EC" id="2.8.1.12"/>
    </reaction>
</comment>
<comment type="pathway">
    <text>Cofactor biosynthesis; molybdopterin biosynthesis.</text>
</comment>
<comment type="subunit">
    <text evidence="1">Heterotetramer of 2 MoaD subunits and 2 MoaE subunits. Also stable as homodimer. The enzyme changes between these two forms during catalysis (By similarity).</text>
</comment>
<comment type="similarity">
    <text evidence="2">Belongs to the MoaE family.</text>
</comment>